<keyword id="KW-0008">Acetylcholine receptor inhibiting toxin</keyword>
<keyword id="KW-0027">Amidation</keyword>
<keyword id="KW-1015">Disulfide bond</keyword>
<keyword id="KW-0872">Ion channel impairing toxin</keyword>
<keyword id="KW-0528">Neurotoxin</keyword>
<keyword id="KW-0629">Postsynaptic neurotoxin</keyword>
<keyword id="KW-0873">Pyrrolidone carboxylic acid</keyword>
<keyword id="KW-0964">Secreted</keyword>
<keyword id="KW-0800">Toxin</keyword>
<comment type="function">
    <text evidence="1">Alpha-conotoxins act on postsynaptic membranes, they bind to the nicotinic acetylcholine receptors (nAChR) and thus inhibit them.</text>
</comment>
<comment type="subcellular location">
    <subcellularLocation>
        <location evidence="6">Secreted</location>
    </subcellularLocation>
</comment>
<comment type="tissue specificity">
    <text evidence="6">Expressed by the venom duct.</text>
</comment>
<comment type="domain">
    <text evidence="5">The cysteine framework is I (CC-C-C). Alpha4/6 pattern.</text>
</comment>
<comment type="similarity">
    <text evidence="5">Belongs to the conotoxin A superfamily.</text>
</comment>
<evidence type="ECO:0000250" key="1"/>
<evidence type="ECO:0000250" key="2">
    <source>
        <dbReference type="UniProtKB" id="D4HRK4"/>
    </source>
</evidence>
<evidence type="ECO:0000250" key="3">
    <source>
        <dbReference type="UniProtKB" id="K8DWB5"/>
    </source>
</evidence>
<evidence type="ECO:0000303" key="4">
    <source>
    </source>
</evidence>
<evidence type="ECO:0000305" key="5"/>
<evidence type="ECO:0000305" key="6">
    <source>
    </source>
</evidence>
<reference key="1">
    <citation type="journal article" date="2007" name="Toxicon">
        <title>From the identification of gene organization of alpha conotoxins to the cloning of novel toxins.</title>
        <authorList>
            <person name="Yuan D.-D."/>
            <person name="Han Y.-H."/>
            <person name="Wang C.-G."/>
            <person name="Chi C.-W."/>
        </authorList>
    </citation>
    <scope>NUCLEOTIDE SEQUENCE [MRNA]</scope>
    <source>
        <tissue>Venom duct</tissue>
    </source>
</reference>
<sequence length="40" mass="4069">VVLGPASDGRNAAANNKASDLIRQICCGYGDCGFVPNVCV</sequence>
<accession>P0CAQ7</accession>
<accession>A1X8B7</accession>
<accession>A6M937</accession>
<accession>A6M939</accession>
<protein>
    <recommendedName>
        <fullName evidence="4">Alpha-conotoxin-like Lp1.6b</fullName>
    </recommendedName>
</protein>
<feature type="propeptide" id="PRO_0000377446" evidence="6">
    <location>
        <begin position="1" status="less than"/>
        <end position="23"/>
    </location>
</feature>
<feature type="peptide" id="PRO_0000377447" description="Alpha-conotoxin-like Lp1.6b" evidence="6">
    <location>
        <begin position="24"/>
        <end position="40"/>
    </location>
</feature>
<feature type="modified residue" description="Pyrrolidone carboxylic acid" evidence="2">
    <location>
        <position position="24"/>
    </location>
</feature>
<feature type="disulfide bond" evidence="3">
    <location>
        <begin position="26"/>
        <end position="32"/>
    </location>
</feature>
<feature type="disulfide bond" evidence="3">
    <location>
        <begin position="27"/>
        <end position="39"/>
    </location>
</feature>
<feature type="non-terminal residue">
    <location>
        <position position="1"/>
    </location>
</feature>
<proteinExistence type="evidence at transcript level"/>
<organism>
    <name type="scientific">Conus leopardus</name>
    <name type="common">Leopard cone</name>
    <dbReference type="NCBI Taxonomy" id="101306"/>
    <lineage>
        <taxon>Eukaryota</taxon>
        <taxon>Metazoa</taxon>
        <taxon>Spiralia</taxon>
        <taxon>Lophotrochozoa</taxon>
        <taxon>Mollusca</taxon>
        <taxon>Gastropoda</taxon>
        <taxon>Caenogastropoda</taxon>
        <taxon>Neogastropoda</taxon>
        <taxon>Conoidea</taxon>
        <taxon>Conidae</taxon>
        <taxon>Conus</taxon>
        <taxon>Lithoconus</taxon>
    </lineage>
</organism>
<dbReference type="EMBL" id="DQ359143">
    <property type="protein sequence ID" value="ABD48794.1"/>
    <property type="molecule type" value="mRNA"/>
</dbReference>
<dbReference type="ConoServer" id="573">
    <property type="toxin name" value="Lp1.6b precursor"/>
</dbReference>
<dbReference type="GO" id="GO:0005576">
    <property type="term" value="C:extracellular region"/>
    <property type="evidence" value="ECO:0007669"/>
    <property type="project" value="UniProtKB-SubCell"/>
</dbReference>
<dbReference type="GO" id="GO:0035792">
    <property type="term" value="C:host cell postsynaptic membrane"/>
    <property type="evidence" value="ECO:0007669"/>
    <property type="project" value="UniProtKB-KW"/>
</dbReference>
<dbReference type="GO" id="GO:0030550">
    <property type="term" value="F:acetylcholine receptor inhibitor activity"/>
    <property type="evidence" value="ECO:0007669"/>
    <property type="project" value="UniProtKB-KW"/>
</dbReference>
<dbReference type="GO" id="GO:0099106">
    <property type="term" value="F:ion channel regulator activity"/>
    <property type="evidence" value="ECO:0007669"/>
    <property type="project" value="UniProtKB-KW"/>
</dbReference>
<dbReference type="GO" id="GO:0090729">
    <property type="term" value="F:toxin activity"/>
    <property type="evidence" value="ECO:0007669"/>
    <property type="project" value="UniProtKB-KW"/>
</dbReference>
<dbReference type="InterPro" id="IPR009958">
    <property type="entry name" value="Conotoxin_a-typ"/>
</dbReference>
<dbReference type="Pfam" id="PF07365">
    <property type="entry name" value="Toxin_8"/>
    <property type="match status" value="1"/>
</dbReference>
<name>CA16B_CONLE</name>